<organism>
    <name type="scientific">Shewanella oneidensis (strain ATCC 700550 / JCM 31522 / CIP 106686 / LMG 19005 / NCIMB 14063 / MR-1)</name>
    <dbReference type="NCBI Taxonomy" id="211586"/>
    <lineage>
        <taxon>Bacteria</taxon>
        <taxon>Pseudomonadati</taxon>
        <taxon>Pseudomonadota</taxon>
        <taxon>Gammaproteobacteria</taxon>
        <taxon>Alteromonadales</taxon>
        <taxon>Shewanellaceae</taxon>
        <taxon>Shewanella</taxon>
    </lineage>
</organism>
<dbReference type="EC" id="3.6.1.-" evidence="1"/>
<dbReference type="EMBL" id="AE014299">
    <property type="protein sequence ID" value="AAN53669.1"/>
    <property type="molecule type" value="Genomic_DNA"/>
</dbReference>
<dbReference type="RefSeq" id="NP_716224.1">
    <property type="nucleotide sequence ID" value="NC_004347.2"/>
</dbReference>
<dbReference type="RefSeq" id="WP_011070926.1">
    <property type="nucleotide sequence ID" value="NC_004347.2"/>
</dbReference>
<dbReference type="SMR" id="Q8EJ79"/>
<dbReference type="STRING" id="211586.SO_0591"/>
<dbReference type="PaxDb" id="211586-SO_0591"/>
<dbReference type="KEGG" id="son:SO_0591"/>
<dbReference type="PATRIC" id="fig|211586.12.peg.573"/>
<dbReference type="eggNOG" id="COG1162">
    <property type="taxonomic scope" value="Bacteria"/>
</dbReference>
<dbReference type="HOGENOM" id="CLU_033617_2_0_6"/>
<dbReference type="OrthoDB" id="9809485at2"/>
<dbReference type="PhylomeDB" id="Q8EJ79"/>
<dbReference type="BioCyc" id="SONE211586:G1GMP-560-MONOMER"/>
<dbReference type="Proteomes" id="UP000008186">
    <property type="component" value="Chromosome"/>
</dbReference>
<dbReference type="GO" id="GO:0005737">
    <property type="term" value="C:cytoplasm"/>
    <property type="evidence" value="ECO:0007669"/>
    <property type="project" value="UniProtKB-SubCell"/>
</dbReference>
<dbReference type="GO" id="GO:0005525">
    <property type="term" value="F:GTP binding"/>
    <property type="evidence" value="ECO:0007669"/>
    <property type="project" value="UniProtKB-UniRule"/>
</dbReference>
<dbReference type="GO" id="GO:0003924">
    <property type="term" value="F:GTPase activity"/>
    <property type="evidence" value="ECO:0007669"/>
    <property type="project" value="UniProtKB-UniRule"/>
</dbReference>
<dbReference type="GO" id="GO:0046872">
    <property type="term" value="F:metal ion binding"/>
    <property type="evidence" value="ECO:0007669"/>
    <property type="project" value="UniProtKB-KW"/>
</dbReference>
<dbReference type="GO" id="GO:0019843">
    <property type="term" value="F:rRNA binding"/>
    <property type="evidence" value="ECO:0007669"/>
    <property type="project" value="UniProtKB-KW"/>
</dbReference>
<dbReference type="GO" id="GO:0042274">
    <property type="term" value="P:ribosomal small subunit biogenesis"/>
    <property type="evidence" value="ECO:0007669"/>
    <property type="project" value="UniProtKB-UniRule"/>
</dbReference>
<dbReference type="CDD" id="cd01854">
    <property type="entry name" value="YjeQ_EngC"/>
    <property type="match status" value="1"/>
</dbReference>
<dbReference type="Gene3D" id="2.40.50.140">
    <property type="entry name" value="Nucleic acid-binding proteins"/>
    <property type="match status" value="1"/>
</dbReference>
<dbReference type="Gene3D" id="3.40.50.300">
    <property type="entry name" value="P-loop containing nucleotide triphosphate hydrolases"/>
    <property type="match status" value="1"/>
</dbReference>
<dbReference type="Gene3D" id="1.10.40.50">
    <property type="entry name" value="Probable gtpase engc, domain 3"/>
    <property type="match status" value="1"/>
</dbReference>
<dbReference type="HAMAP" id="MF_01820">
    <property type="entry name" value="GTPase_RsgA"/>
    <property type="match status" value="1"/>
</dbReference>
<dbReference type="InterPro" id="IPR030378">
    <property type="entry name" value="G_CP_dom"/>
</dbReference>
<dbReference type="InterPro" id="IPR012340">
    <property type="entry name" value="NA-bd_OB-fold"/>
</dbReference>
<dbReference type="InterPro" id="IPR027417">
    <property type="entry name" value="P-loop_NTPase"/>
</dbReference>
<dbReference type="InterPro" id="IPR004881">
    <property type="entry name" value="Ribosome_biogen_GTPase_RsgA"/>
</dbReference>
<dbReference type="InterPro" id="IPR010914">
    <property type="entry name" value="RsgA_GTPase_dom"/>
</dbReference>
<dbReference type="NCBIfam" id="NF008931">
    <property type="entry name" value="PRK12288.1"/>
    <property type="match status" value="1"/>
</dbReference>
<dbReference type="NCBIfam" id="TIGR00157">
    <property type="entry name" value="ribosome small subunit-dependent GTPase A"/>
    <property type="match status" value="1"/>
</dbReference>
<dbReference type="PANTHER" id="PTHR32120">
    <property type="entry name" value="SMALL RIBOSOMAL SUBUNIT BIOGENESIS GTPASE RSGA"/>
    <property type="match status" value="1"/>
</dbReference>
<dbReference type="PANTHER" id="PTHR32120:SF11">
    <property type="entry name" value="SMALL RIBOSOMAL SUBUNIT BIOGENESIS GTPASE RSGA 1, MITOCHONDRIAL-RELATED"/>
    <property type="match status" value="1"/>
</dbReference>
<dbReference type="Pfam" id="PF03193">
    <property type="entry name" value="RsgA_GTPase"/>
    <property type="match status" value="1"/>
</dbReference>
<dbReference type="SUPFAM" id="SSF52540">
    <property type="entry name" value="P-loop containing nucleoside triphosphate hydrolases"/>
    <property type="match status" value="1"/>
</dbReference>
<dbReference type="PROSITE" id="PS50936">
    <property type="entry name" value="ENGC_GTPASE"/>
    <property type="match status" value="1"/>
</dbReference>
<dbReference type="PROSITE" id="PS51721">
    <property type="entry name" value="G_CP"/>
    <property type="match status" value="1"/>
</dbReference>
<sequence>MSKKKPLSQGQLRRMRANHEKRLNRDSGDKNTPELQDSSLGPEQSGTVISRFGQHADIETEDGHIVRCNIRRTITSLVTGDKVIVRLAIESQANSGIAGIVEAVHPRHSSLSRPDLYDGVKIIASNIDQILIVSSVLPSFTTQIIDRYLVAAEDTDIPPIIILNKIDLLTPEEAPAIEEALKRYQDIGYPVYKVSSKLGEGLETIKALLKDKVSVFAGQSGVGKSSLVNALLPEAELLVGDVSDNSGLGQHTTTTAKLLHLPSGGDLIDSPGVREFALWHLPAQRVGWCFIEFRDFLGGCKFRDCKHGDDPGCALKAAVDAGKISEDRFNNYHRIIASLDEQRHARQFRAQSDE</sequence>
<gene>
    <name evidence="1" type="primary">rsgA</name>
    <name type="ordered locus">SO_0591</name>
</gene>
<keyword id="KW-0963">Cytoplasm</keyword>
<keyword id="KW-0342">GTP-binding</keyword>
<keyword id="KW-0378">Hydrolase</keyword>
<keyword id="KW-0479">Metal-binding</keyword>
<keyword id="KW-0547">Nucleotide-binding</keyword>
<keyword id="KW-1185">Reference proteome</keyword>
<keyword id="KW-0690">Ribosome biogenesis</keyword>
<keyword id="KW-0694">RNA-binding</keyword>
<keyword id="KW-0699">rRNA-binding</keyword>
<keyword id="KW-0862">Zinc</keyword>
<protein>
    <recommendedName>
        <fullName evidence="1">Small ribosomal subunit biogenesis GTPase RsgA</fullName>
        <ecNumber evidence="1">3.6.1.-</ecNumber>
    </recommendedName>
</protein>
<evidence type="ECO:0000255" key="1">
    <source>
        <dbReference type="HAMAP-Rule" id="MF_01820"/>
    </source>
</evidence>
<evidence type="ECO:0000255" key="2">
    <source>
        <dbReference type="PROSITE-ProRule" id="PRU01058"/>
    </source>
</evidence>
<evidence type="ECO:0000256" key="3">
    <source>
        <dbReference type="SAM" id="MobiDB-lite"/>
    </source>
</evidence>
<comment type="function">
    <text evidence="1">One of several proteins that assist in the late maturation steps of the functional core of the 30S ribosomal subunit. Helps release RbfA from mature subunits. May play a role in the assembly of ribosomal proteins into the subunit. Circularly permuted GTPase that catalyzes slow GTP hydrolysis, GTPase activity is stimulated by the 30S ribosomal subunit.</text>
</comment>
<comment type="cofactor">
    <cofactor evidence="1">
        <name>Zn(2+)</name>
        <dbReference type="ChEBI" id="CHEBI:29105"/>
    </cofactor>
    <text evidence="1">Binds 1 zinc ion per subunit.</text>
</comment>
<comment type="subunit">
    <text evidence="1">Monomer. Associates with 30S ribosomal subunit, binds 16S rRNA.</text>
</comment>
<comment type="subcellular location">
    <subcellularLocation>
        <location evidence="1">Cytoplasm</location>
    </subcellularLocation>
</comment>
<comment type="similarity">
    <text evidence="1">Belongs to the TRAFAC class YlqF/YawG GTPase family. RsgA subfamily.</text>
</comment>
<accession>Q8EJ79</accession>
<proteinExistence type="inferred from homology"/>
<reference key="1">
    <citation type="journal article" date="2002" name="Nat. Biotechnol.">
        <title>Genome sequence of the dissimilatory metal ion-reducing bacterium Shewanella oneidensis.</title>
        <authorList>
            <person name="Heidelberg J.F."/>
            <person name="Paulsen I.T."/>
            <person name="Nelson K.E."/>
            <person name="Gaidos E.J."/>
            <person name="Nelson W.C."/>
            <person name="Read T.D."/>
            <person name="Eisen J.A."/>
            <person name="Seshadri R."/>
            <person name="Ward N.L."/>
            <person name="Methe B.A."/>
            <person name="Clayton R.A."/>
            <person name="Meyer T."/>
            <person name="Tsapin A."/>
            <person name="Scott J."/>
            <person name="Beanan M.J."/>
            <person name="Brinkac L.M."/>
            <person name="Daugherty S.C."/>
            <person name="DeBoy R.T."/>
            <person name="Dodson R.J."/>
            <person name="Durkin A.S."/>
            <person name="Haft D.H."/>
            <person name="Kolonay J.F."/>
            <person name="Madupu R."/>
            <person name="Peterson J.D."/>
            <person name="Umayam L.A."/>
            <person name="White O."/>
            <person name="Wolf A.M."/>
            <person name="Vamathevan J.J."/>
            <person name="Weidman J.F."/>
            <person name="Impraim M."/>
            <person name="Lee K."/>
            <person name="Berry K.J."/>
            <person name="Lee C."/>
            <person name="Mueller J."/>
            <person name="Khouri H.M."/>
            <person name="Gill J."/>
            <person name="Utterback T.R."/>
            <person name="McDonald L.A."/>
            <person name="Feldblyum T.V."/>
            <person name="Smith H.O."/>
            <person name="Venter J.C."/>
            <person name="Nealson K.H."/>
            <person name="Fraser C.M."/>
        </authorList>
    </citation>
    <scope>NUCLEOTIDE SEQUENCE [LARGE SCALE GENOMIC DNA]</scope>
    <source>
        <strain>ATCC 700550 / JCM 31522 / CIP 106686 / LMG 19005 / NCIMB 14063 / MR-1</strain>
    </source>
</reference>
<feature type="chain" id="PRO_0000171512" description="Small ribosomal subunit biogenesis GTPase RsgA">
    <location>
        <begin position="1"/>
        <end position="354"/>
    </location>
</feature>
<feature type="domain" description="CP-type G" evidence="2">
    <location>
        <begin position="108"/>
        <end position="276"/>
    </location>
</feature>
<feature type="region of interest" description="Disordered" evidence="3">
    <location>
        <begin position="1"/>
        <end position="46"/>
    </location>
</feature>
<feature type="compositionally biased region" description="Basic and acidic residues" evidence="3">
    <location>
        <begin position="17"/>
        <end position="32"/>
    </location>
</feature>
<feature type="compositionally biased region" description="Polar residues" evidence="3">
    <location>
        <begin position="33"/>
        <end position="46"/>
    </location>
</feature>
<feature type="binding site" evidence="1">
    <location>
        <begin position="164"/>
        <end position="167"/>
    </location>
    <ligand>
        <name>GTP</name>
        <dbReference type="ChEBI" id="CHEBI:37565"/>
    </ligand>
</feature>
<feature type="binding site" evidence="1">
    <location>
        <begin position="218"/>
        <end position="226"/>
    </location>
    <ligand>
        <name>GTP</name>
        <dbReference type="ChEBI" id="CHEBI:37565"/>
    </ligand>
</feature>
<feature type="binding site" evidence="1">
    <location>
        <position position="300"/>
    </location>
    <ligand>
        <name>Zn(2+)</name>
        <dbReference type="ChEBI" id="CHEBI:29105"/>
    </ligand>
</feature>
<feature type="binding site" evidence="1">
    <location>
        <position position="305"/>
    </location>
    <ligand>
        <name>Zn(2+)</name>
        <dbReference type="ChEBI" id="CHEBI:29105"/>
    </ligand>
</feature>
<feature type="binding site" evidence="1">
    <location>
        <position position="307"/>
    </location>
    <ligand>
        <name>Zn(2+)</name>
        <dbReference type="ChEBI" id="CHEBI:29105"/>
    </ligand>
</feature>
<feature type="binding site" evidence="1">
    <location>
        <position position="313"/>
    </location>
    <ligand>
        <name>Zn(2+)</name>
        <dbReference type="ChEBI" id="CHEBI:29105"/>
    </ligand>
</feature>
<name>RSGA_SHEON</name>